<keyword id="KW-0227">DNA damage</keyword>
<keyword id="KW-0234">DNA repair</keyword>
<keyword id="KW-0235">DNA replication</keyword>
<keyword id="KW-0436">Ligase</keyword>
<keyword id="KW-0460">Magnesium</keyword>
<keyword id="KW-0464">Manganese</keyword>
<keyword id="KW-0479">Metal-binding</keyword>
<keyword id="KW-0520">NAD</keyword>
<keyword id="KW-1185">Reference proteome</keyword>
<keyword id="KW-0862">Zinc</keyword>
<name>DNLJ_COREF</name>
<organism>
    <name type="scientific">Corynebacterium efficiens (strain DSM 44549 / YS-314 / AJ 12310 / JCM 11189 / NBRC 100395)</name>
    <dbReference type="NCBI Taxonomy" id="196164"/>
    <lineage>
        <taxon>Bacteria</taxon>
        <taxon>Bacillati</taxon>
        <taxon>Actinomycetota</taxon>
        <taxon>Actinomycetes</taxon>
        <taxon>Mycobacteriales</taxon>
        <taxon>Corynebacteriaceae</taxon>
        <taxon>Corynebacterium</taxon>
    </lineage>
</organism>
<accession>Q8FPZ7</accession>
<sequence>MSLAGLHRPGGVHCGAVPALALKIVPETDLLLVISHRLHLHEFLPAHGGQFGPDAGLLPGDAGSGQSVGGGFVGVAQLHLIMGAQISQGALALPVGILDPVDGVGIIDQSIDGEVTGETPQHGQIIGSVIHDEGLIISPALLDSPDGLSQHLLMGLAMLPGVFRGDAMHRGGTLGDLHPGVGEQFEWGGSGIGDSHHRGGDDAGFKGVGGGGFQVEGEHVCGVEVGGEFHRGIHGFNPNQRPGHRVPPPDAIRDHLESGTVTDDNAQLRRTWNELAEKVRYHRDLYYNQQPEIPDADFDALFRQLQDLEEQHPELAVPDSPTKEVGAPVTEQSSFDNVEHLERMLSLDNVFDEEELRDWLARTPAKRYLTELKIDGLSIDLVYRNGMLERAATRGDGRVGEDITANARVIGDIPHELTATEEYPIPAVLEVRGEVFIPIEDFADVNAQRIEDGGKPFANPRNAAAGSLRQKNPEDVKKRRLRMITHGIGYSEGFQPASQHDAYLALAAWGLPTSSYTEAVETADAVVDKVLYWADHRHDALHEMDGLVIKVDDIASQRALGSTSRAPRWAIAYKYPPEEVTTKLIDIKVSVGRTGRVTPFAMMEPVFVAGSTVSMATLHNQSEVKRKGVLIGDTVVVRKAGEVIPEVLGPVVELRDGTEREFVFPEHCPECGSTLAPTRAEDADWRCPNTRSCPGQLSQRLTYIAGRGAFDIEALGEKGAQDLIRNGILVDEAGLFDLTEEDLLESDVYTTKAGAVNASGRKLLANLEQRKNTDLWRVLVALSIRHVGPTAARALAGRYRSMQKLVDAPVDELAETDGVGMIIAQSFKDWFEVDWHRAIVDTWAAAGVTMEDAETEQLEQTLEGLTIVVTGGLEGFTRDSVKEAIISRGGKASGSVSKKTDYVVVGENAGSKATKAEELGLTILDEEAFVRLLDTGAV</sequence>
<proteinExistence type="inferred from homology"/>
<protein>
    <recommendedName>
        <fullName>DNA ligase</fullName>
        <ecNumber>6.5.1.2</ecNumber>
    </recommendedName>
    <alternativeName>
        <fullName>Polydeoxyribonucleotide synthase [NAD(+)]</fullName>
    </alternativeName>
</protein>
<dbReference type="EC" id="6.5.1.2"/>
<dbReference type="EMBL" id="BA000035">
    <property type="protein sequence ID" value="BAC18148.1"/>
    <property type="molecule type" value="Genomic_DNA"/>
</dbReference>
<dbReference type="SMR" id="Q8FPZ7"/>
<dbReference type="STRING" id="196164.gene:10741747"/>
<dbReference type="KEGG" id="cef:CE1339"/>
<dbReference type="eggNOG" id="COG0272">
    <property type="taxonomic scope" value="Bacteria"/>
</dbReference>
<dbReference type="HOGENOM" id="CLU_007764_2_0_11"/>
<dbReference type="Proteomes" id="UP000001409">
    <property type="component" value="Chromosome"/>
</dbReference>
<dbReference type="GO" id="GO:0005829">
    <property type="term" value="C:cytosol"/>
    <property type="evidence" value="ECO:0007669"/>
    <property type="project" value="TreeGrafter"/>
</dbReference>
<dbReference type="GO" id="GO:0003911">
    <property type="term" value="F:DNA ligase (NAD+) activity"/>
    <property type="evidence" value="ECO:0007669"/>
    <property type="project" value="UniProtKB-UniRule"/>
</dbReference>
<dbReference type="GO" id="GO:0046872">
    <property type="term" value="F:metal ion binding"/>
    <property type="evidence" value="ECO:0007669"/>
    <property type="project" value="UniProtKB-KW"/>
</dbReference>
<dbReference type="GO" id="GO:0006281">
    <property type="term" value="P:DNA repair"/>
    <property type="evidence" value="ECO:0007669"/>
    <property type="project" value="UniProtKB-KW"/>
</dbReference>
<dbReference type="GO" id="GO:0006260">
    <property type="term" value="P:DNA replication"/>
    <property type="evidence" value="ECO:0007669"/>
    <property type="project" value="UniProtKB-KW"/>
</dbReference>
<dbReference type="CDD" id="cd17748">
    <property type="entry name" value="BRCT_DNA_ligase_like"/>
    <property type="match status" value="1"/>
</dbReference>
<dbReference type="CDD" id="cd00114">
    <property type="entry name" value="LIGANc"/>
    <property type="match status" value="1"/>
</dbReference>
<dbReference type="FunFam" id="2.40.50.140:FF:000012">
    <property type="entry name" value="DNA ligase"/>
    <property type="match status" value="1"/>
</dbReference>
<dbReference type="FunFam" id="3.40.50.10190:FF:000054">
    <property type="entry name" value="DNA ligase"/>
    <property type="match status" value="1"/>
</dbReference>
<dbReference type="Gene3D" id="6.20.10.30">
    <property type="match status" value="1"/>
</dbReference>
<dbReference type="Gene3D" id="1.10.150.20">
    <property type="entry name" value="5' to 3' exonuclease, C-terminal subdomain"/>
    <property type="match status" value="2"/>
</dbReference>
<dbReference type="Gene3D" id="3.40.50.10190">
    <property type="entry name" value="BRCT domain"/>
    <property type="match status" value="1"/>
</dbReference>
<dbReference type="Gene3D" id="3.30.470.30">
    <property type="entry name" value="DNA ligase/mRNA capping enzyme"/>
    <property type="match status" value="1"/>
</dbReference>
<dbReference type="Gene3D" id="1.10.287.610">
    <property type="entry name" value="Helix hairpin bin"/>
    <property type="match status" value="1"/>
</dbReference>
<dbReference type="Gene3D" id="2.40.50.140">
    <property type="entry name" value="Nucleic acid-binding proteins"/>
    <property type="match status" value="1"/>
</dbReference>
<dbReference type="HAMAP" id="MF_01588">
    <property type="entry name" value="DNA_ligase_A"/>
    <property type="match status" value="1"/>
</dbReference>
<dbReference type="InterPro" id="IPR001357">
    <property type="entry name" value="BRCT_dom"/>
</dbReference>
<dbReference type="InterPro" id="IPR036420">
    <property type="entry name" value="BRCT_dom_sf"/>
</dbReference>
<dbReference type="InterPro" id="IPR041663">
    <property type="entry name" value="DisA/LigA_HHH"/>
</dbReference>
<dbReference type="InterPro" id="IPR001679">
    <property type="entry name" value="DNA_ligase"/>
</dbReference>
<dbReference type="InterPro" id="IPR018239">
    <property type="entry name" value="DNA_ligase_AS"/>
</dbReference>
<dbReference type="InterPro" id="IPR033136">
    <property type="entry name" value="DNA_ligase_CS"/>
</dbReference>
<dbReference type="InterPro" id="IPR013839">
    <property type="entry name" value="DNAligase_adenylation"/>
</dbReference>
<dbReference type="InterPro" id="IPR013840">
    <property type="entry name" value="DNAligase_N"/>
</dbReference>
<dbReference type="InterPro" id="IPR012340">
    <property type="entry name" value="NA-bd_OB-fold"/>
</dbReference>
<dbReference type="InterPro" id="IPR004150">
    <property type="entry name" value="NAD_DNA_ligase_OB"/>
</dbReference>
<dbReference type="InterPro" id="IPR010994">
    <property type="entry name" value="RuvA_2-like"/>
</dbReference>
<dbReference type="InterPro" id="IPR004149">
    <property type="entry name" value="Znf_DNAligase_C4"/>
</dbReference>
<dbReference type="NCBIfam" id="TIGR00575">
    <property type="entry name" value="dnlj"/>
    <property type="match status" value="1"/>
</dbReference>
<dbReference type="NCBIfam" id="NF005932">
    <property type="entry name" value="PRK07956.1"/>
    <property type="match status" value="1"/>
</dbReference>
<dbReference type="PANTHER" id="PTHR23389">
    <property type="entry name" value="CHROMOSOME TRANSMISSION FIDELITY FACTOR 18"/>
    <property type="match status" value="1"/>
</dbReference>
<dbReference type="PANTHER" id="PTHR23389:SF9">
    <property type="entry name" value="DNA LIGASE"/>
    <property type="match status" value="1"/>
</dbReference>
<dbReference type="Pfam" id="PF00533">
    <property type="entry name" value="BRCT"/>
    <property type="match status" value="1"/>
</dbReference>
<dbReference type="Pfam" id="PF01653">
    <property type="entry name" value="DNA_ligase_aden"/>
    <property type="match status" value="1"/>
</dbReference>
<dbReference type="Pfam" id="PF03120">
    <property type="entry name" value="DNA_ligase_OB"/>
    <property type="match status" value="1"/>
</dbReference>
<dbReference type="Pfam" id="PF03119">
    <property type="entry name" value="DNA_ligase_ZBD"/>
    <property type="match status" value="1"/>
</dbReference>
<dbReference type="Pfam" id="PF12826">
    <property type="entry name" value="HHH_2"/>
    <property type="match status" value="1"/>
</dbReference>
<dbReference type="SMART" id="SM00292">
    <property type="entry name" value="BRCT"/>
    <property type="match status" value="1"/>
</dbReference>
<dbReference type="SMART" id="SM00532">
    <property type="entry name" value="LIGANc"/>
    <property type="match status" value="1"/>
</dbReference>
<dbReference type="SUPFAM" id="SSF52113">
    <property type="entry name" value="BRCT domain"/>
    <property type="match status" value="1"/>
</dbReference>
<dbReference type="SUPFAM" id="SSF56091">
    <property type="entry name" value="DNA ligase/mRNA capping enzyme, catalytic domain"/>
    <property type="match status" value="1"/>
</dbReference>
<dbReference type="SUPFAM" id="SSF50249">
    <property type="entry name" value="Nucleic acid-binding proteins"/>
    <property type="match status" value="1"/>
</dbReference>
<dbReference type="SUPFAM" id="SSF47781">
    <property type="entry name" value="RuvA domain 2-like"/>
    <property type="match status" value="1"/>
</dbReference>
<dbReference type="PROSITE" id="PS50172">
    <property type="entry name" value="BRCT"/>
    <property type="match status" value="1"/>
</dbReference>
<dbReference type="PROSITE" id="PS01055">
    <property type="entry name" value="DNA_LIGASE_N1"/>
    <property type="match status" value="1"/>
</dbReference>
<dbReference type="PROSITE" id="PS01056">
    <property type="entry name" value="DNA_LIGASE_N2"/>
    <property type="match status" value="1"/>
</dbReference>
<comment type="function">
    <text evidence="1">DNA ligase that catalyzes the formation of phosphodiester linkages between 5'-phosphoryl and 3'-hydroxyl groups in double-stranded DNA using NAD as a coenzyme and as the energy source for the reaction. It is essential for DNA replication and repair of damaged DNA (By similarity).</text>
</comment>
<comment type="catalytic activity">
    <reaction>
        <text>NAD(+) + (deoxyribonucleotide)n-3'-hydroxyl + 5'-phospho-(deoxyribonucleotide)m = (deoxyribonucleotide)n+m + AMP + beta-nicotinamide D-nucleotide.</text>
        <dbReference type="EC" id="6.5.1.2"/>
    </reaction>
</comment>
<comment type="cofactor">
    <cofactor evidence="1">
        <name>Mg(2+)</name>
        <dbReference type="ChEBI" id="CHEBI:18420"/>
    </cofactor>
    <cofactor evidence="1">
        <name>Mn(2+)</name>
        <dbReference type="ChEBI" id="CHEBI:29035"/>
    </cofactor>
</comment>
<comment type="similarity">
    <text evidence="2">Belongs to the NAD-dependent DNA ligase family. LigA subfamily.</text>
</comment>
<gene>
    <name type="primary">ligA</name>
    <name type="ordered locus">CE1339</name>
</gene>
<feature type="chain" id="PRO_0000340396" description="DNA ligase">
    <location>
        <begin position="1"/>
        <end position="938"/>
    </location>
</feature>
<feature type="domain" description="BRCT">
    <location>
        <begin position="857"/>
        <end position="938"/>
    </location>
</feature>
<feature type="region of interest" description="Unknown">
    <location>
        <begin position="1"/>
        <end position="260"/>
    </location>
</feature>
<feature type="region of interest" description="DNA ligase">
    <location>
        <begin position="261"/>
        <end position="938"/>
    </location>
</feature>
<feature type="active site" description="N6-AMP-lysine intermediate" evidence="1">
    <location>
        <position position="373"/>
    </location>
</feature>
<feature type="binding site" evidence="1">
    <location>
        <begin position="295"/>
        <end position="299"/>
    </location>
    <ligand>
        <name>NAD(+)</name>
        <dbReference type="ChEBI" id="CHEBI:57540"/>
    </ligand>
</feature>
<feature type="binding site" evidence="1">
    <location>
        <begin position="346"/>
        <end position="347"/>
    </location>
    <ligand>
        <name>NAD(+)</name>
        <dbReference type="ChEBI" id="CHEBI:57540"/>
    </ligand>
</feature>
<feature type="binding site" evidence="1">
    <location>
        <position position="371"/>
    </location>
    <ligand>
        <name>NAD(+)</name>
        <dbReference type="ChEBI" id="CHEBI:57540"/>
    </ligand>
</feature>
<feature type="binding site" evidence="1">
    <location>
        <position position="394"/>
    </location>
    <ligand>
        <name>NAD(+)</name>
        <dbReference type="ChEBI" id="CHEBI:57540"/>
    </ligand>
</feature>
<feature type="binding site" evidence="1">
    <location>
        <position position="434"/>
    </location>
    <ligand>
        <name>NAD(+)</name>
        <dbReference type="ChEBI" id="CHEBI:57540"/>
    </ligand>
</feature>
<feature type="binding site" evidence="1">
    <location>
        <position position="550"/>
    </location>
    <ligand>
        <name>NAD(+)</name>
        <dbReference type="ChEBI" id="CHEBI:57540"/>
    </ligand>
</feature>
<feature type="binding site" evidence="1">
    <location>
        <position position="574"/>
    </location>
    <ligand>
        <name>NAD(+)</name>
        <dbReference type="ChEBI" id="CHEBI:57540"/>
    </ligand>
</feature>
<feature type="binding site" evidence="1">
    <location>
        <position position="668"/>
    </location>
    <ligand>
        <name>Zn(2+)</name>
        <dbReference type="ChEBI" id="CHEBI:29105"/>
    </ligand>
</feature>
<feature type="binding site" evidence="1">
    <location>
        <position position="671"/>
    </location>
    <ligand>
        <name>Zn(2+)</name>
        <dbReference type="ChEBI" id="CHEBI:29105"/>
    </ligand>
</feature>
<feature type="binding site" evidence="1">
    <location>
        <position position="687"/>
    </location>
    <ligand>
        <name>Zn(2+)</name>
        <dbReference type="ChEBI" id="CHEBI:29105"/>
    </ligand>
</feature>
<feature type="binding site" evidence="1">
    <location>
        <position position="693"/>
    </location>
    <ligand>
        <name>Zn(2+)</name>
        <dbReference type="ChEBI" id="CHEBI:29105"/>
    </ligand>
</feature>
<reference key="1">
    <citation type="journal article" date="2003" name="Genome Res.">
        <title>Comparative complete genome sequence analysis of the amino acid replacements responsible for the thermostability of Corynebacterium efficiens.</title>
        <authorList>
            <person name="Nishio Y."/>
            <person name="Nakamura Y."/>
            <person name="Kawarabayasi Y."/>
            <person name="Usuda Y."/>
            <person name="Kimura E."/>
            <person name="Sugimoto S."/>
            <person name="Matsui K."/>
            <person name="Yamagishi A."/>
            <person name="Kikuchi H."/>
            <person name="Ikeo K."/>
            <person name="Gojobori T."/>
        </authorList>
    </citation>
    <scope>NUCLEOTIDE SEQUENCE [LARGE SCALE GENOMIC DNA]</scope>
    <source>
        <strain>DSM 44549 / YS-314 / AJ 12310 / JCM 11189 / NBRC 100395</strain>
    </source>
</reference>
<evidence type="ECO:0000250" key="1"/>
<evidence type="ECO:0000305" key="2"/>